<accession>B1L3X7</accession>
<feature type="chain" id="PRO_0000348616" description="5-formaminoimidazole-4-carboxamide-1-(beta)-D-ribofuranosyl 5'-monophosphate synthetase">
    <location>
        <begin position="1"/>
        <end position="366"/>
    </location>
</feature>
<feature type="domain" description="ATP-grasp" evidence="2">
    <location>
        <begin position="131"/>
        <end position="357"/>
    </location>
</feature>
<feature type="binding site" evidence="2">
    <location>
        <position position="27"/>
    </location>
    <ligand>
        <name>5-amino-1-(5-phospho-beta-D-ribosyl)imidazole-4-carboxamide</name>
        <dbReference type="ChEBI" id="CHEBI:58475"/>
    </ligand>
</feature>
<feature type="binding site" evidence="2">
    <location>
        <position position="96"/>
    </location>
    <ligand>
        <name>5-amino-1-(5-phospho-beta-D-ribosyl)imidazole-4-carboxamide</name>
        <dbReference type="ChEBI" id="CHEBI:58475"/>
    </ligand>
</feature>
<feature type="binding site" evidence="2">
    <location>
        <begin position="154"/>
        <end position="208"/>
    </location>
    <ligand>
        <name>ATP</name>
        <dbReference type="ChEBI" id="CHEBI:30616"/>
    </ligand>
</feature>
<feature type="binding site" evidence="2">
    <location>
        <position position="239"/>
    </location>
    <ligand>
        <name>ATP</name>
        <dbReference type="ChEBI" id="CHEBI:30616"/>
    </ligand>
</feature>
<feature type="binding site" evidence="2">
    <location>
        <position position="263"/>
    </location>
    <ligand>
        <name>5-amino-1-(5-phospho-beta-D-ribosyl)imidazole-4-carboxamide</name>
        <dbReference type="ChEBI" id="CHEBI:58475"/>
    </ligand>
</feature>
<feature type="binding site" evidence="2">
    <location>
        <position position="302"/>
    </location>
    <ligand>
        <name>Mg(2+)</name>
        <dbReference type="ChEBI" id="CHEBI:18420"/>
    </ligand>
</feature>
<feature type="binding site" evidence="2">
    <location>
        <position position="315"/>
    </location>
    <ligand>
        <name>Mg(2+)</name>
        <dbReference type="ChEBI" id="CHEBI:18420"/>
    </ligand>
</feature>
<evidence type="ECO:0000250" key="1"/>
<evidence type="ECO:0000255" key="2">
    <source>
        <dbReference type="HAMAP-Rule" id="MF_01163"/>
    </source>
</evidence>
<organism>
    <name type="scientific">Korarchaeum cryptofilum (strain OPF8)</name>
    <dbReference type="NCBI Taxonomy" id="374847"/>
    <lineage>
        <taxon>Archaea</taxon>
        <taxon>Thermoproteota</taxon>
        <taxon>Candidatus Korarchaeia</taxon>
        <taxon>Candidatus Korarchaeales</taxon>
        <taxon>Candidatus Korarchaeaceae</taxon>
        <taxon>Candidatus Korarchaeum</taxon>
    </lineage>
</organism>
<dbReference type="EC" id="6.3.4.23" evidence="2"/>
<dbReference type="EMBL" id="CP000968">
    <property type="protein sequence ID" value="ACB07156.1"/>
    <property type="molecule type" value="Genomic_DNA"/>
</dbReference>
<dbReference type="RefSeq" id="WP_012309053.1">
    <property type="nucleotide sequence ID" value="NC_010482.1"/>
</dbReference>
<dbReference type="SMR" id="B1L3X7"/>
<dbReference type="STRING" id="374847.Kcr_0400"/>
<dbReference type="EnsemblBacteria" id="ACB07156">
    <property type="protein sequence ID" value="ACB07156"/>
    <property type="gene ID" value="Kcr_0400"/>
</dbReference>
<dbReference type="GeneID" id="6093687"/>
<dbReference type="KEGG" id="kcr:Kcr_0400"/>
<dbReference type="eggNOG" id="arCOG04346">
    <property type="taxonomic scope" value="Archaea"/>
</dbReference>
<dbReference type="HOGENOM" id="CLU_065084_0_0_2"/>
<dbReference type="InParanoid" id="B1L3X7"/>
<dbReference type="OrthoDB" id="14832at2157"/>
<dbReference type="PhylomeDB" id="B1L3X7"/>
<dbReference type="UniPathway" id="UPA00074">
    <property type="reaction ID" value="UER00134"/>
</dbReference>
<dbReference type="Proteomes" id="UP000001686">
    <property type="component" value="Chromosome"/>
</dbReference>
<dbReference type="GO" id="GO:0005524">
    <property type="term" value="F:ATP binding"/>
    <property type="evidence" value="ECO:0007669"/>
    <property type="project" value="UniProtKB-KW"/>
</dbReference>
<dbReference type="GO" id="GO:0016879">
    <property type="term" value="F:ligase activity, forming carbon-nitrogen bonds"/>
    <property type="evidence" value="ECO:0007669"/>
    <property type="project" value="UniProtKB-UniRule"/>
</dbReference>
<dbReference type="GO" id="GO:0000287">
    <property type="term" value="F:magnesium ion binding"/>
    <property type="evidence" value="ECO:0007669"/>
    <property type="project" value="InterPro"/>
</dbReference>
<dbReference type="GO" id="GO:0006189">
    <property type="term" value="P:'de novo' IMP biosynthetic process"/>
    <property type="evidence" value="ECO:0007669"/>
    <property type="project" value="UniProtKB-UniRule"/>
</dbReference>
<dbReference type="Gene3D" id="3.40.50.20">
    <property type="match status" value="1"/>
</dbReference>
<dbReference type="Gene3D" id="3.30.1490.20">
    <property type="entry name" value="ATP-grasp fold, A domain"/>
    <property type="match status" value="1"/>
</dbReference>
<dbReference type="Gene3D" id="3.30.470.20">
    <property type="entry name" value="ATP-grasp fold, B domain"/>
    <property type="match status" value="1"/>
</dbReference>
<dbReference type="HAMAP" id="MF_01163">
    <property type="entry name" value="IMP_biosynth_PurP"/>
    <property type="match status" value="1"/>
</dbReference>
<dbReference type="InterPro" id="IPR011761">
    <property type="entry name" value="ATP-grasp"/>
</dbReference>
<dbReference type="InterPro" id="IPR013815">
    <property type="entry name" value="ATP_grasp_subdomain_1"/>
</dbReference>
<dbReference type="InterPro" id="IPR023656">
    <property type="entry name" value="IMP_biosynth_PurP"/>
</dbReference>
<dbReference type="InterPro" id="IPR009720">
    <property type="entry name" value="IMP_biosynth_PurP_C"/>
</dbReference>
<dbReference type="InterPro" id="IPR010672">
    <property type="entry name" value="IMP_biosynth_PurP_N"/>
</dbReference>
<dbReference type="InterPro" id="IPR016185">
    <property type="entry name" value="PreATP-grasp_dom_sf"/>
</dbReference>
<dbReference type="PANTHER" id="PTHR38147:SF2">
    <property type="entry name" value="5-FORMAMINOIMIDAZOLE-4-CARBOXAMIDE-1-(BETA)-D-RIBOFURANOSYL 5'-MONOPHOSPHATE SYNTHETASE"/>
    <property type="match status" value="1"/>
</dbReference>
<dbReference type="PANTHER" id="PTHR38147">
    <property type="entry name" value="5-FORMAMINOIMIDAZOLE-4-CARBOXAMIDE-1-(BETA)-D-RIBOFURANOSYL 5'-MONOPHOSPHATE SYNTHETASE-RELATED"/>
    <property type="match status" value="1"/>
</dbReference>
<dbReference type="Pfam" id="PF06849">
    <property type="entry name" value="DUF1246"/>
    <property type="match status" value="1"/>
</dbReference>
<dbReference type="Pfam" id="PF06973">
    <property type="entry name" value="DUF1297"/>
    <property type="match status" value="1"/>
</dbReference>
<dbReference type="PIRSF" id="PIRSF004602">
    <property type="entry name" value="ATPgrasp_PurP"/>
    <property type="match status" value="1"/>
</dbReference>
<dbReference type="SUPFAM" id="SSF56059">
    <property type="entry name" value="Glutathione synthetase ATP-binding domain-like"/>
    <property type="match status" value="1"/>
</dbReference>
<dbReference type="SUPFAM" id="SSF52440">
    <property type="entry name" value="PreATP-grasp domain"/>
    <property type="match status" value="1"/>
</dbReference>
<dbReference type="PROSITE" id="PS50975">
    <property type="entry name" value="ATP_GRASP"/>
    <property type="match status" value="1"/>
</dbReference>
<gene>
    <name evidence="2" type="primary">purP</name>
    <name type="ordered locus">Kcr_0400</name>
</gene>
<name>PURP_KORCO</name>
<protein>
    <recommendedName>
        <fullName evidence="2">5-formaminoimidazole-4-carboxamide-1-(beta)-D-ribofuranosyl 5'-monophosphate synthetase</fullName>
        <ecNumber evidence="2">6.3.4.23</ecNumber>
    </recommendedName>
    <alternativeName>
        <fullName evidence="2">5-aminoimidazole-4-carboxamide-1-beta-D-ribofuranosyl 5'-monophosphate--formate ligase</fullName>
    </alternativeName>
</protein>
<sequence length="366" mass="42141">MIPRERILSVLSKYDESDVKIGTICSHSSLQIFNGARREGLRSVGIVLRENKPYYESFPRASPDIFIEVDSYGDLLSEETQEELISENVIMIPHGSFVEYVGSENILERFRVPMFGNRLTLYWEGDRRRQRKWLEDAGVPTPRIYRSPEDIDRPVIVKLHGAKGGKGYFKASSPEEFYEKFSELKERGLVGSLEDVVIEEFIVGVRFYPHFFFSPIEGENIADLEGGRLELLGIDRRLEVIDEIHRGLPDLMEDFMDYTVTGNIPVIVREKYLVDLLRDAVKIISSSRRLFYPGLIGPFCMEMIYNPSRGFITFEVSARIVAGTNLYTDGSPYSYYYYDEPMSMGRRIAREIKEAVKSGSLHKIIY</sequence>
<reference key="1">
    <citation type="journal article" date="2008" name="Proc. Natl. Acad. Sci. U.S.A.">
        <title>A korarchaeal genome reveals new insights into the evolution of the Archaea.</title>
        <authorList>
            <person name="Elkins J.G."/>
            <person name="Podar M."/>
            <person name="Graham D.E."/>
            <person name="Makarova K.S."/>
            <person name="Wolf Y."/>
            <person name="Randau L."/>
            <person name="Hedlund B.P."/>
            <person name="Brochier-Armanet C."/>
            <person name="Kunin V."/>
            <person name="Anderson I."/>
            <person name="Lapidus A."/>
            <person name="Goltsman E."/>
            <person name="Barry K."/>
            <person name="Koonin E.V."/>
            <person name="Hugenholtz P."/>
            <person name="Kyrpides N."/>
            <person name="Wanner G."/>
            <person name="Richardson P."/>
            <person name="Keller M."/>
            <person name="Stetter K.O."/>
        </authorList>
    </citation>
    <scope>NUCLEOTIDE SEQUENCE [LARGE SCALE GENOMIC DNA]</scope>
    <source>
        <strain>OPF8</strain>
    </source>
</reference>
<comment type="function">
    <text evidence="2">Catalyzes the ATP- and formate-dependent formylation of 5-aminoimidazole-4-carboxamide-1-beta-d-ribofuranosyl 5'-monophosphate (AICAR) to 5-formaminoimidazole-4-carboxamide-1-beta-d-ribofuranosyl 5'-monophosphate (FAICAR) in the absence of folates.</text>
</comment>
<comment type="catalytic activity">
    <reaction evidence="2">
        <text>5-amino-1-(5-phospho-beta-D-ribosyl)imidazole-4-carboxamide + formate + ATP = 5-formamido-1-(5-phospho-D-ribosyl)imidazole-4-carboxamide + ADP + phosphate</text>
        <dbReference type="Rhea" id="RHEA:24836"/>
        <dbReference type="ChEBI" id="CHEBI:15740"/>
        <dbReference type="ChEBI" id="CHEBI:30616"/>
        <dbReference type="ChEBI" id="CHEBI:43474"/>
        <dbReference type="ChEBI" id="CHEBI:58467"/>
        <dbReference type="ChEBI" id="CHEBI:58475"/>
        <dbReference type="ChEBI" id="CHEBI:456216"/>
        <dbReference type="EC" id="6.3.4.23"/>
    </reaction>
</comment>
<comment type="cofactor">
    <cofactor evidence="1">
        <name>Mg(2+)</name>
        <dbReference type="ChEBI" id="CHEBI:18420"/>
    </cofactor>
    <cofactor evidence="1">
        <name>Mn(2+)</name>
        <dbReference type="ChEBI" id="CHEBI:29035"/>
    </cofactor>
    <text evidence="1">Binds 1 Mg(2+) or Mn(2+) ion per subunit.</text>
</comment>
<comment type="pathway">
    <text evidence="2">Purine metabolism; IMP biosynthesis via de novo pathway; 5-formamido-1-(5-phospho-D-ribosyl)imidazole-4-carboxamide from 5-amino-1-(5-phospho-D-ribosyl)imidazole-4-carboxamide (formate route): step 1/1.</text>
</comment>
<comment type="similarity">
    <text evidence="2">Belongs to the phosphohexose mutase family.</text>
</comment>
<proteinExistence type="inferred from homology"/>
<keyword id="KW-0067">ATP-binding</keyword>
<keyword id="KW-0436">Ligase</keyword>
<keyword id="KW-0460">Magnesium</keyword>
<keyword id="KW-0464">Manganese</keyword>
<keyword id="KW-0479">Metal-binding</keyword>
<keyword id="KW-0547">Nucleotide-binding</keyword>
<keyword id="KW-0658">Purine biosynthesis</keyword>
<keyword id="KW-1185">Reference proteome</keyword>